<name>BD1L1_HUMAN</name>
<reference key="1">
    <citation type="journal article" date="2005" name="Nature">
        <title>Generation and annotation of the DNA sequences of human chromosomes 2 and 4.</title>
        <authorList>
            <person name="Hillier L.W."/>
            <person name="Graves T.A."/>
            <person name="Fulton R.S."/>
            <person name="Fulton L.A."/>
            <person name="Pepin K.H."/>
            <person name="Minx P."/>
            <person name="Wagner-McPherson C."/>
            <person name="Layman D."/>
            <person name="Wylie K."/>
            <person name="Sekhon M."/>
            <person name="Becker M.C."/>
            <person name="Fewell G.A."/>
            <person name="Delehaunty K.D."/>
            <person name="Miner T.L."/>
            <person name="Nash W.E."/>
            <person name="Kremitzki C."/>
            <person name="Oddy L."/>
            <person name="Du H."/>
            <person name="Sun H."/>
            <person name="Bradshaw-Cordum H."/>
            <person name="Ali J."/>
            <person name="Carter J."/>
            <person name="Cordes M."/>
            <person name="Harris A."/>
            <person name="Isak A."/>
            <person name="van Brunt A."/>
            <person name="Nguyen C."/>
            <person name="Du F."/>
            <person name="Courtney L."/>
            <person name="Kalicki J."/>
            <person name="Ozersky P."/>
            <person name="Abbott S."/>
            <person name="Armstrong J."/>
            <person name="Belter E.A."/>
            <person name="Caruso L."/>
            <person name="Cedroni M."/>
            <person name="Cotton M."/>
            <person name="Davidson T."/>
            <person name="Desai A."/>
            <person name="Elliott G."/>
            <person name="Erb T."/>
            <person name="Fronick C."/>
            <person name="Gaige T."/>
            <person name="Haakenson W."/>
            <person name="Haglund K."/>
            <person name="Holmes A."/>
            <person name="Harkins R."/>
            <person name="Kim K."/>
            <person name="Kruchowski S.S."/>
            <person name="Strong C.M."/>
            <person name="Grewal N."/>
            <person name="Goyea E."/>
            <person name="Hou S."/>
            <person name="Levy A."/>
            <person name="Martinka S."/>
            <person name="Mead K."/>
            <person name="McLellan M.D."/>
            <person name="Meyer R."/>
            <person name="Randall-Maher J."/>
            <person name="Tomlinson C."/>
            <person name="Dauphin-Kohlberg S."/>
            <person name="Kozlowicz-Reilly A."/>
            <person name="Shah N."/>
            <person name="Swearengen-Shahid S."/>
            <person name="Snider J."/>
            <person name="Strong J.T."/>
            <person name="Thompson J."/>
            <person name="Yoakum M."/>
            <person name="Leonard S."/>
            <person name="Pearman C."/>
            <person name="Trani L."/>
            <person name="Radionenko M."/>
            <person name="Waligorski J.E."/>
            <person name="Wang C."/>
            <person name="Rock S.M."/>
            <person name="Tin-Wollam A.-M."/>
            <person name="Maupin R."/>
            <person name="Latreille P."/>
            <person name="Wendl M.C."/>
            <person name="Yang S.-P."/>
            <person name="Pohl C."/>
            <person name="Wallis J.W."/>
            <person name="Spieth J."/>
            <person name="Bieri T.A."/>
            <person name="Berkowicz N."/>
            <person name="Nelson J.O."/>
            <person name="Osborne J."/>
            <person name="Ding L."/>
            <person name="Meyer R."/>
            <person name="Sabo A."/>
            <person name="Shotland Y."/>
            <person name="Sinha P."/>
            <person name="Wohldmann P.E."/>
            <person name="Cook L.L."/>
            <person name="Hickenbotham M.T."/>
            <person name="Eldred J."/>
            <person name="Williams D."/>
            <person name="Jones T.A."/>
            <person name="She X."/>
            <person name="Ciccarelli F.D."/>
            <person name="Izaurralde E."/>
            <person name="Taylor J."/>
            <person name="Schmutz J."/>
            <person name="Myers R.M."/>
            <person name="Cox D.R."/>
            <person name="Huang X."/>
            <person name="McPherson J.D."/>
            <person name="Mardis E.R."/>
            <person name="Clifton S.W."/>
            <person name="Warren W.C."/>
            <person name="Chinwalla A.T."/>
            <person name="Eddy S.R."/>
            <person name="Marra M.A."/>
            <person name="Ovcharenko I."/>
            <person name="Furey T.S."/>
            <person name="Miller W."/>
            <person name="Eichler E.E."/>
            <person name="Bork P."/>
            <person name="Suyama M."/>
            <person name="Torrents D."/>
            <person name="Waterston R.H."/>
            <person name="Wilson R.K."/>
        </authorList>
    </citation>
    <scope>NUCLEOTIDE SEQUENCE [LARGE SCALE GENOMIC DNA]</scope>
</reference>
<reference key="2">
    <citation type="submission" date="2002-07" db="EMBL/GenBank/DDBJ databases">
        <authorList>
            <person name="Guo J.H."/>
            <person name="Yu L."/>
        </authorList>
    </citation>
    <scope>NUCLEOTIDE SEQUENCE [LARGE SCALE MRNA] OF 1-502</scope>
    <source>
        <tissue>Ovary</tissue>
    </source>
</reference>
<reference key="3">
    <citation type="journal article" date="2004" name="Genome Res.">
        <title>The status, quality, and expansion of the NIH full-length cDNA project: the Mammalian Gene Collection (MGC).</title>
        <authorList>
            <consortium name="The MGC Project Team"/>
        </authorList>
    </citation>
    <scope>NUCLEOTIDE SEQUENCE [LARGE SCALE MRNA] OF 1-338 AND 2649-3051</scope>
    <source>
        <tissue>Duodenum</tissue>
        <tissue>Skin</tissue>
        <tissue>Uterus</tissue>
    </source>
</reference>
<reference key="4">
    <citation type="journal article" date="2004" name="Nat. Genet.">
        <title>Complete sequencing and characterization of 21,243 full-length human cDNAs.</title>
        <authorList>
            <person name="Ota T."/>
            <person name="Suzuki Y."/>
            <person name="Nishikawa T."/>
            <person name="Otsuki T."/>
            <person name="Sugiyama T."/>
            <person name="Irie R."/>
            <person name="Wakamatsu A."/>
            <person name="Hayashi K."/>
            <person name="Sato H."/>
            <person name="Nagai K."/>
            <person name="Kimura K."/>
            <person name="Makita H."/>
            <person name="Sekine M."/>
            <person name="Obayashi M."/>
            <person name="Nishi T."/>
            <person name="Shibahara T."/>
            <person name="Tanaka T."/>
            <person name="Ishii S."/>
            <person name="Yamamoto J."/>
            <person name="Saito K."/>
            <person name="Kawai Y."/>
            <person name="Isono Y."/>
            <person name="Nakamura Y."/>
            <person name="Nagahari K."/>
            <person name="Murakami K."/>
            <person name="Yasuda T."/>
            <person name="Iwayanagi T."/>
            <person name="Wagatsuma M."/>
            <person name="Shiratori A."/>
            <person name="Sudo H."/>
            <person name="Hosoiri T."/>
            <person name="Kaku Y."/>
            <person name="Kodaira H."/>
            <person name="Kondo H."/>
            <person name="Sugawara M."/>
            <person name="Takahashi M."/>
            <person name="Kanda K."/>
            <person name="Yokoi T."/>
            <person name="Furuya T."/>
            <person name="Kikkawa E."/>
            <person name="Omura Y."/>
            <person name="Abe K."/>
            <person name="Kamihara K."/>
            <person name="Katsuta N."/>
            <person name="Sato K."/>
            <person name="Tanikawa M."/>
            <person name="Yamazaki M."/>
            <person name="Ninomiya K."/>
            <person name="Ishibashi T."/>
            <person name="Yamashita H."/>
            <person name="Murakawa K."/>
            <person name="Fujimori K."/>
            <person name="Tanai H."/>
            <person name="Kimata M."/>
            <person name="Watanabe M."/>
            <person name="Hiraoka S."/>
            <person name="Chiba Y."/>
            <person name="Ishida S."/>
            <person name="Ono Y."/>
            <person name="Takiguchi S."/>
            <person name="Watanabe S."/>
            <person name="Yosida M."/>
            <person name="Hotuta T."/>
            <person name="Kusano J."/>
            <person name="Kanehori K."/>
            <person name="Takahashi-Fujii A."/>
            <person name="Hara H."/>
            <person name="Tanase T.-O."/>
            <person name="Nomura Y."/>
            <person name="Togiya S."/>
            <person name="Komai F."/>
            <person name="Hara R."/>
            <person name="Takeuchi K."/>
            <person name="Arita M."/>
            <person name="Imose N."/>
            <person name="Musashino K."/>
            <person name="Yuuki H."/>
            <person name="Oshima A."/>
            <person name="Sasaki N."/>
            <person name="Aotsuka S."/>
            <person name="Yoshikawa Y."/>
            <person name="Matsunawa H."/>
            <person name="Ichihara T."/>
            <person name="Shiohata N."/>
            <person name="Sano S."/>
            <person name="Moriya S."/>
            <person name="Momiyama H."/>
            <person name="Satoh N."/>
            <person name="Takami S."/>
            <person name="Terashima Y."/>
            <person name="Suzuki O."/>
            <person name="Nakagawa S."/>
            <person name="Senoh A."/>
            <person name="Mizoguchi H."/>
            <person name="Goto Y."/>
            <person name="Shimizu F."/>
            <person name="Wakebe H."/>
            <person name="Hishigaki H."/>
            <person name="Watanabe T."/>
            <person name="Sugiyama A."/>
            <person name="Takemoto M."/>
            <person name="Kawakami B."/>
            <person name="Yamazaki M."/>
            <person name="Watanabe K."/>
            <person name="Kumagai A."/>
            <person name="Itakura S."/>
            <person name="Fukuzumi Y."/>
            <person name="Fujimori Y."/>
            <person name="Komiyama M."/>
            <person name="Tashiro H."/>
            <person name="Tanigami A."/>
            <person name="Fujiwara T."/>
            <person name="Ono T."/>
            <person name="Yamada K."/>
            <person name="Fujii Y."/>
            <person name="Ozaki K."/>
            <person name="Hirao M."/>
            <person name="Ohmori Y."/>
            <person name="Kawabata A."/>
            <person name="Hikiji T."/>
            <person name="Kobatake N."/>
            <person name="Inagaki H."/>
            <person name="Ikema Y."/>
            <person name="Okamoto S."/>
            <person name="Okitani R."/>
            <person name="Kawakami T."/>
            <person name="Noguchi S."/>
            <person name="Itoh T."/>
            <person name="Shigeta K."/>
            <person name="Senba T."/>
            <person name="Matsumura K."/>
            <person name="Nakajima Y."/>
            <person name="Mizuno T."/>
            <person name="Morinaga M."/>
            <person name="Sasaki M."/>
            <person name="Togashi T."/>
            <person name="Oyama M."/>
            <person name="Hata H."/>
            <person name="Watanabe M."/>
            <person name="Komatsu T."/>
            <person name="Mizushima-Sugano J."/>
            <person name="Satoh T."/>
            <person name="Shirai Y."/>
            <person name="Takahashi Y."/>
            <person name="Nakagawa K."/>
            <person name="Okumura K."/>
            <person name="Nagase T."/>
            <person name="Nomura N."/>
            <person name="Kikuchi H."/>
            <person name="Masuho Y."/>
            <person name="Yamashita R."/>
            <person name="Nakai K."/>
            <person name="Yada T."/>
            <person name="Nakamura Y."/>
            <person name="Ohara O."/>
            <person name="Isogai T."/>
            <person name="Sugano S."/>
        </authorList>
    </citation>
    <scope>NUCLEOTIDE SEQUENCE [LARGE SCALE MRNA] OF 1207-1861</scope>
</reference>
<reference key="5">
    <citation type="journal article" date="2000" name="DNA Res.">
        <title>Prediction of the coding sequences of unidentified human genes. XVI. The complete sequences of 150 new cDNA clones from brain which code for large proteins in vitro.</title>
        <authorList>
            <person name="Nagase T."/>
            <person name="Kikuno R."/>
            <person name="Ishikawa K."/>
            <person name="Hirosawa M."/>
            <person name="Ohara O."/>
        </authorList>
    </citation>
    <scope>NUCLEOTIDE SEQUENCE [LARGE SCALE MRNA] OF 1248-3051</scope>
    <scope>VARIANT LEU-2396</scope>
    <source>
        <tissue>Brain</tissue>
    </source>
</reference>
<reference key="6">
    <citation type="journal article" date="2002" name="DNA Res.">
        <title>Construction of expression-ready cDNA clones for KIAA genes: manual curation of 330 KIAA cDNA clones.</title>
        <authorList>
            <person name="Nakajima D."/>
            <person name="Okazaki N."/>
            <person name="Yamakawa H."/>
            <person name="Kikuno R."/>
            <person name="Ohara O."/>
            <person name="Nagase T."/>
        </authorList>
    </citation>
    <scope>SEQUENCE REVISION</scope>
</reference>
<reference key="7">
    <citation type="journal article" date="2007" name="BMC Genomics">
        <title>The full-ORF clone resource of the German cDNA consortium.</title>
        <authorList>
            <person name="Bechtel S."/>
            <person name="Rosenfelder H."/>
            <person name="Duda A."/>
            <person name="Schmidt C.P."/>
            <person name="Ernst U."/>
            <person name="Wellenreuther R."/>
            <person name="Mehrle A."/>
            <person name="Schuster C."/>
            <person name="Bahr A."/>
            <person name="Bloecker H."/>
            <person name="Heubner D."/>
            <person name="Hoerlein A."/>
            <person name="Michel G."/>
            <person name="Wedler H."/>
            <person name="Koehrer K."/>
            <person name="Ottenwaelder B."/>
            <person name="Poustka A."/>
            <person name="Wiemann S."/>
            <person name="Schupp I."/>
        </authorList>
    </citation>
    <scope>NUCLEOTIDE SEQUENCE [LARGE SCALE MRNA] OF 2444-2874</scope>
    <source>
        <tissue>Testis</tissue>
    </source>
</reference>
<reference key="8">
    <citation type="journal article" date="2006" name="Cell">
        <title>Global, in vivo, and site-specific phosphorylation dynamics in signaling networks.</title>
        <authorList>
            <person name="Olsen J.V."/>
            <person name="Blagoev B."/>
            <person name="Gnad F."/>
            <person name="Macek B."/>
            <person name="Kumar C."/>
            <person name="Mortensen P."/>
            <person name="Mann M."/>
        </authorList>
    </citation>
    <scope>IDENTIFICATION BY MASS SPECTROMETRY [LARGE SCALE ANALYSIS]</scope>
    <source>
        <tissue>Cervix carcinoma</tissue>
    </source>
</reference>
<reference key="9">
    <citation type="journal article" date="2006" name="Nat. Biotechnol.">
        <title>A probability-based approach for high-throughput protein phosphorylation analysis and site localization.</title>
        <authorList>
            <person name="Beausoleil S.A."/>
            <person name="Villen J."/>
            <person name="Gerber S.A."/>
            <person name="Rush J."/>
            <person name="Gygi S.P."/>
        </authorList>
    </citation>
    <scope>PHOSPHORYLATION [LARGE SCALE ANALYSIS] AT THR-1354</scope>
    <scope>IDENTIFICATION BY MASS SPECTROMETRY [LARGE SCALE ANALYSIS]</scope>
    <source>
        <tissue>Cervix carcinoma</tissue>
    </source>
</reference>
<reference key="10">
    <citation type="journal article" date="2007" name="Proteomics">
        <title>Tryptic digestion of ubiquitin standards reveals an improved strategy for identifying ubiquitinated proteins by mass spectrometry.</title>
        <authorList>
            <person name="Denis N.J."/>
            <person name="Vasilescu J."/>
            <person name="Lambert J.-P."/>
            <person name="Smith J.C."/>
            <person name="Figeys D."/>
        </authorList>
    </citation>
    <scope>UBIQUITINATION [LARGE SCALE ANALYSIS] AT LYS-2981 AND LYS-2982</scope>
    <scope>IDENTIFICATION BY MASS SPECTROMETRY</scope>
    <source>
        <tissue>Mammary cancer</tissue>
    </source>
</reference>
<reference key="11">
    <citation type="journal article" date="2007" name="Science">
        <title>ATM and ATR substrate analysis reveals extensive protein networks responsive to DNA damage.</title>
        <authorList>
            <person name="Matsuoka S."/>
            <person name="Ballif B.A."/>
            <person name="Smogorzewska A."/>
            <person name="McDonald E.R. III"/>
            <person name="Hurov K.E."/>
            <person name="Luo J."/>
            <person name="Bakalarski C.E."/>
            <person name="Zhao Z."/>
            <person name="Solimini N."/>
            <person name="Lerenthal Y."/>
            <person name="Shiloh Y."/>
            <person name="Gygi S.P."/>
            <person name="Elledge S.J."/>
        </authorList>
    </citation>
    <scope>PHOSPHORYLATION [LARGE SCALE ANALYSIS] AT SER-1145 AND SER-1710</scope>
    <scope>IDENTIFICATION BY MASS SPECTROMETRY [LARGE SCALE ANALYSIS]</scope>
    <source>
        <tissue>Embryonic kidney</tissue>
    </source>
</reference>
<reference key="12">
    <citation type="journal article" date="2008" name="Proc. Natl. Acad. Sci. U.S.A.">
        <title>A quantitative atlas of mitotic phosphorylation.</title>
        <authorList>
            <person name="Dephoure N."/>
            <person name="Zhou C."/>
            <person name="Villen J."/>
            <person name="Beausoleil S.A."/>
            <person name="Bakalarski C.E."/>
            <person name="Elledge S.J."/>
            <person name="Gygi S.P."/>
        </authorList>
    </citation>
    <scope>PHOSPHORYLATION [LARGE SCALE ANALYSIS] AT SER-482; SER-484; THR-1354; SER-1531; SER-2954 AND SER-2986</scope>
    <scope>IDENTIFICATION BY MASS SPECTROMETRY [LARGE SCALE ANALYSIS]</scope>
    <source>
        <tissue>Cervix carcinoma</tissue>
    </source>
</reference>
<reference key="13">
    <citation type="journal article" date="2009" name="Anal. Chem.">
        <title>Lys-N and trypsin cover complementary parts of the phosphoproteome in a refined SCX-based approach.</title>
        <authorList>
            <person name="Gauci S."/>
            <person name="Helbig A.O."/>
            <person name="Slijper M."/>
            <person name="Krijgsveld J."/>
            <person name="Heck A.J."/>
            <person name="Mohammed S."/>
        </authorList>
    </citation>
    <scope>IDENTIFICATION BY MASS SPECTROMETRY [LARGE SCALE ANALYSIS]</scope>
</reference>
<reference key="14">
    <citation type="journal article" date="2009" name="Sci. Signal.">
        <title>Quantitative phosphoproteomic analysis of T cell receptor signaling reveals system-wide modulation of protein-protein interactions.</title>
        <authorList>
            <person name="Mayya V."/>
            <person name="Lundgren D.H."/>
            <person name="Hwang S.-I."/>
            <person name="Rezaul K."/>
            <person name="Wu L."/>
            <person name="Eng J.K."/>
            <person name="Rodionov V."/>
            <person name="Han D.K."/>
        </authorList>
    </citation>
    <scope>PHOSPHORYLATION [LARGE SCALE ANALYSIS] AT SER-266; SER-482; SER-484; SER-2907; THR-2956; SER-2958 AND SER-2964</scope>
    <scope>IDENTIFICATION BY MASS SPECTROMETRY [LARGE SCALE ANALYSIS]</scope>
    <source>
        <tissue>Leukemic T-cell</tissue>
    </source>
</reference>
<reference key="15">
    <citation type="journal article" date="2009" name="Science">
        <title>Lysine acetylation targets protein complexes and co-regulates major cellular functions.</title>
        <authorList>
            <person name="Choudhary C."/>
            <person name="Kumar C."/>
            <person name="Gnad F."/>
            <person name="Nielsen M.L."/>
            <person name="Rehman M."/>
            <person name="Walther T.C."/>
            <person name="Olsen J.V."/>
            <person name="Mann M."/>
        </authorList>
    </citation>
    <scope>ACETYLATION [LARGE SCALE ANALYSIS] AT LYS-473</scope>
    <scope>IDENTIFICATION BY MASS SPECTROMETRY [LARGE SCALE ANALYSIS]</scope>
</reference>
<reference key="16">
    <citation type="journal article" date="2010" name="Sci. Signal.">
        <title>Quantitative phosphoproteomics reveals widespread full phosphorylation site occupancy during mitosis.</title>
        <authorList>
            <person name="Olsen J.V."/>
            <person name="Vermeulen M."/>
            <person name="Santamaria A."/>
            <person name="Kumar C."/>
            <person name="Miller M.L."/>
            <person name="Jensen L.J."/>
            <person name="Gnad F."/>
            <person name="Cox J."/>
            <person name="Jensen T.S."/>
            <person name="Nigg E.A."/>
            <person name="Brunak S."/>
            <person name="Mann M."/>
        </authorList>
    </citation>
    <scope>PHOSPHORYLATION [LARGE SCALE ANALYSIS] AT SER-482; SER-484; SER-635; SER-1531 AND SER-2501</scope>
    <scope>IDENTIFICATION BY MASS SPECTROMETRY [LARGE SCALE ANALYSIS]</scope>
    <source>
        <tissue>Cervix carcinoma</tissue>
    </source>
</reference>
<reference key="17">
    <citation type="journal article" date="2011" name="BMC Syst. Biol.">
        <title>Initial characterization of the human central proteome.</title>
        <authorList>
            <person name="Burkard T.R."/>
            <person name="Planyavsky M."/>
            <person name="Kaupe I."/>
            <person name="Breitwieser F.P."/>
            <person name="Buerckstuemmer T."/>
            <person name="Bennett K.L."/>
            <person name="Superti-Furga G."/>
            <person name="Colinge J."/>
        </authorList>
    </citation>
    <scope>IDENTIFICATION BY MASS SPECTROMETRY [LARGE SCALE ANALYSIS]</scope>
</reference>
<reference key="18">
    <citation type="journal article" date="2011" name="Sci. Signal.">
        <title>System-wide temporal characterization of the proteome and phosphoproteome of human embryonic stem cell differentiation.</title>
        <authorList>
            <person name="Rigbolt K.T."/>
            <person name="Prokhorova T.A."/>
            <person name="Akimov V."/>
            <person name="Henningsen J."/>
            <person name="Johansen P.T."/>
            <person name="Kratchmarova I."/>
            <person name="Kassem M."/>
            <person name="Mann M."/>
            <person name="Olsen J.V."/>
            <person name="Blagoev B."/>
        </authorList>
    </citation>
    <scope>PHOSPHORYLATION [LARGE SCALE ANALYSIS] AT SER-266; SER-482; SER-484; SER-1531; SER-2905; SER-2973 AND SER-2986</scope>
    <scope>IDENTIFICATION BY MASS SPECTROMETRY [LARGE SCALE ANALYSIS]</scope>
</reference>
<reference key="19">
    <citation type="journal article" date="2013" name="J. Proteome Res.">
        <title>Toward a comprehensive characterization of a human cancer cell phosphoproteome.</title>
        <authorList>
            <person name="Zhou H."/>
            <person name="Di Palma S."/>
            <person name="Preisinger C."/>
            <person name="Peng M."/>
            <person name="Polat A.N."/>
            <person name="Heck A.J."/>
            <person name="Mohammed S."/>
        </authorList>
    </citation>
    <scope>PHOSPHORYLATION [LARGE SCALE ANALYSIS] AT SER-266; SER-482; SER-484; SER-635; SER-659; THR-660; THR-733; SER-1077; SER-1318; THR-1354; SER-1531; SER-1701; SER-2128; SER-2475; SER-2501; SER-2905; THR-2956; SER-2986 AND SER-3019</scope>
    <scope>IDENTIFICATION BY MASS SPECTROMETRY [LARGE SCALE ANALYSIS]</scope>
    <source>
        <tissue>Cervix carcinoma</tissue>
        <tissue>Erythroleukemia</tissue>
    </source>
</reference>
<reference key="20">
    <citation type="journal article" date="2014" name="J. Proteomics">
        <title>An enzyme assisted RP-RPLC approach for in-depth analysis of human liver phosphoproteome.</title>
        <authorList>
            <person name="Bian Y."/>
            <person name="Song C."/>
            <person name="Cheng K."/>
            <person name="Dong M."/>
            <person name="Wang F."/>
            <person name="Huang J."/>
            <person name="Sun D."/>
            <person name="Wang L."/>
            <person name="Ye M."/>
            <person name="Zou H."/>
        </authorList>
    </citation>
    <scope>PHOSPHORYLATION [LARGE SCALE ANALYSIS] AT SER-2203</scope>
    <scope>IDENTIFICATION BY MASS SPECTROMETRY [LARGE SCALE ANALYSIS]</scope>
    <source>
        <tissue>Liver</tissue>
    </source>
</reference>
<reference key="21">
    <citation type="journal article" date="2006" name="Science">
        <title>The consensus coding sequences of human breast and colorectal cancers.</title>
        <authorList>
            <person name="Sjoeblom T."/>
            <person name="Jones S."/>
            <person name="Wood L.D."/>
            <person name="Parsons D.W."/>
            <person name="Lin J."/>
            <person name="Barber T.D."/>
            <person name="Mandelker D."/>
            <person name="Leary R.J."/>
            <person name="Ptak J."/>
            <person name="Silliman N."/>
            <person name="Szabo S."/>
            <person name="Buckhaults P."/>
            <person name="Farrell C."/>
            <person name="Meeh P."/>
            <person name="Markowitz S.D."/>
            <person name="Willis J."/>
            <person name="Dawson D."/>
            <person name="Willson J.K.V."/>
            <person name="Gazdar A.F."/>
            <person name="Hartigan J."/>
            <person name="Wu L."/>
            <person name="Liu C."/>
            <person name="Parmigiani G."/>
            <person name="Park B.H."/>
            <person name="Bachman K.E."/>
            <person name="Papadopoulos N."/>
            <person name="Vogelstein B."/>
            <person name="Kinzler K.W."/>
            <person name="Velculescu V.E."/>
        </authorList>
    </citation>
    <scope>VARIANT [LARGE SCALE ANALYSIS] ILE-246</scope>
</reference>
<reference key="22">
    <citation type="journal article" date="2015" name="Mol. Cell">
        <title>BOD1L is required to suppress deleterious resection of stressed replication forks.</title>
        <authorList>
            <person name="Higgs M.R."/>
            <person name="Reynolds J.J."/>
            <person name="Winczura A."/>
            <person name="Blackford A.N."/>
            <person name="Borel V."/>
            <person name="Miller E.S."/>
            <person name="Zlatanou A."/>
            <person name="Nieminuszczy J."/>
            <person name="Ryan E.L."/>
            <person name="Davies N.J."/>
            <person name="Stankovic T."/>
            <person name="Boulton S.J."/>
            <person name="Niedzwiedz W."/>
            <person name="Stewart G.S."/>
        </authorList>
    </citation>
    <scope>FUNCTION</scope>
    <scope>SUBCELLULAR LOCATION</scope>
</reference>
<reference key="23">
    <citation type="journal article" date="2018" name="Mol. Cell">
        <title>Histone Methylation by SETD1A Protects Nascent DNA through the Nucleosome Chaperone Activity of FANCD2.</title>
        <authorList>
            <person name="Higgs M.R."/>
            <person name="Sato K."/>
            <person name="Reynolds J.J."/>
            <person name="Begum S."/>
            <person name="Bayley R."/>
            <person name="Goula A."/>
            <person name="Vernet A."/>
            <person name="Paquin K.L."/>
            <person name="Skalnik D.G."/>
            <person name="Kobayashi W."/>
            <person name="Takata M."/>
            <person name="Howlett N.G."/>
            <person name="Kurumizaka H."/>
            <person name="Kimura H."/>
            <person name="Stewart G.S."/>
        </authorList>
    </citation>
    <scope>FUNCTION</scope>
    <scope>INTERACTION WITH SETD1A</scope>
</reference>
<protein>
    <recommendedName>
        <fullName evidence="10">Biorientation of chromosomes in cell division protein 1-like 1</fullName>
    </recommendedName>
</protein>
<sequence>MATNPQPQPPPPAPPPPPPQPQPQPPPPPPGPGAGPGAGGAGGAGAGAGDPQLVAMIVNHLKSQGLFDQFRRDCLADVDTKPAYQNLRQRVDNFVANHLATHTWSPHLNKNQLRNNIRQQVLKSGMLESGIDRIISQVVDPKINHTFRPQVEKAVHEFLATLNHKEEGSGNTAPDDEKPDTSLITQGVPTPGPSANVANDAMSILETITSLNQEASAARASTETSNAKTSERASKKLPSQPTTDTSTDKERTSEDMADKEKSTADSGGEGLETAPKSEEFSDLPCPVEEIKNYTKEHNNLILLNKDVQQESSEQKNKSTDKGEKKPDSNEKGERKKEKKEKTEKKFDHSKKSEDTQKVKDEKQAKEKEVESLKLPSEKNSNKAKTVEGTKEDFSLIDSDVDGLTDITVSSVHTSDLSSFEEDTEEEVVTSDSMEEGEITSDDEEKNKQNKTKTQTSDSSEGKTKSVRHAYVHKPYLYSKYYSDSDDELTVEQRRQSIAKEKEERLLRRQINREKLEEKRKQKAEKTKSSKTKGQGRSSVDLEESSTKSLEPKAARIKEVLKERKVLEKKVALSKKRKKDSRNVEENSKKKQQYEEDSKETLKTSEHCEKEKISSSKELKHVHAKSEPSKPARRLSESLHVVDENKNESKLEREHKRRTSTPVIMEGVQEETDTRDVKRQVERSEICTEEPQKQKSTLKNEKHLKKDDSETPHLKSLLKKEVKSSKEKPEREKTPSEDKLSVKHKYKGDCMHKTGDETELHSSEKGLKVEENIQKQSQQTKLSSDDKTERKSKHRNERKLSVLGKDGKPVSEYIIKTDENVRKENNKKERRLSAEKTKAEHKSRRSSDSKIQKDSLGSKQHGITLQRRSESYSEDKCDMDSTNMDSNLKPEEVVHKEKRRTKSLLEEKLVLKSKSKTQGKQVKVVETELQEGATKQATTPKPDKEKNTEENDSEKQRKSKVEDKPFEETGVEPVLETASSSAHSTQKDSSHRAKLPLAKEKYKSDKDSTSTRLERKLSDGHKSRSLKHSSKDIKKKDENKSDDKDGKEVDSSHEKARGNSSLMEKKLSRRLCENRRGSLSQEMAKGEEKLAANTLSTPSGSSLQRPKKSGDMTLIPEQEPMEIDSEPGVENVFEVSKTQDNRNNNSQQDIDSENMKQKTSATVQKDELRTCTADSKATAPAYKPGRGTGVNSNSEKHADHRSTLTKKMHIQSAVSKMNPGEKEPIHRGTTEVNIDSETVHRMLLSAPSENDRVQKNLKNTAAEEHVAQGDATLEHSTNLDSSPSLSSVTVVPLRESYDPDVIPLFDKRTVLEGSTASTSPADHSALPNQSLTVRESEVLKTSDSKEGGEGFTVDTPAKASITSKRHIPEAHQATLLDGKQGKVIMPLGSKLTGVIVENENITKEGGLVDMAKKENDLNAEPNLKQTIKATVENGKKDGIAVDHVVGLNTEKYAETVKLKHKRSPGKVKDISIDVERRNENSEVDTSAGSGSAPSVLHQRNGQTEDVATGPRRAEKTSVATSTEGKDKDVTLSPVKAGPATTTSSETRQSEVALPCTSIEADEGLIIGTHSRNNPLHVGAEASECTVFAAAEEGGAVVTEGFAESETFLTSTKEGESGECAVAESEDRAADLLAVHAVKIEANVNSVVTEEKDDAVTSAGSEEKCDGSLSRDSEIVEGTITFISEVESDGAVTSAGTEIRAGSISSEEVDGSQGNMMRMGPKKETEGTVTCTGAEGRSDNFVICSVTGAGPREERMVTGAGVVLGDNDAPPGTSASQEGDGSVNDGTEGESAVTSTGITEDGEGPASCTGSEDSSEGFAISSESEENGESAMDSTVAKEGTNVPLVAAGPCDDEGIVTSTGAKEEDEEGEDVVTSTGRGNEIGHASTCTGLGEESEGVLICESAEGDSQIGTVVEHVEAEAGAAIMNANENNVDSMSGTEKGSKDTDICSSAKGIVESSVTSAVSGKDEVTPVPGGCEGPMTSAASDQSDSQLEKVEDTTISTGLVGGSYDVLVSGEVPECEVAHTSPSEKEDEDIITSVENEECDGLMATTASGDITNQNSLAGGKNQGKVLIISTSTTNDYTPQVSAITDVEGGLSDALRTEENMEGTRVTTEEFEAPMPSAVSGDDSQLTASRSEEKDECAMISTSIGEEFELPISSATTIKCAESLQPVAAAVEERATGPVLISTADFEGPMPSAPPEAESPLASTSKEEKDECALISTSIAEECEASVSGVVVESENERAGTVMEEKDGSGIISTSSVEDCEGPVSSAVPQEEGDPSVTPAEEMGDTAMISTSTSEGCEAVMIGAVLQDEDRLTITRVEDLSDAAIISTSTAECMPISASIDRHEENQLTADNPEGNGDLSATEVSKHKVPMPSLIAENNCRCPGPVRGGKEPGPVLAVSTEEGHNGPSVHKPSAGQGHPSAVCAEKEEKHGKECPEIGPFAGRGQKESTLHLINAEEKNVLLNSLQKEDKSPETGTAGGSSTASYSAGRGLEGNANSPAHLRGPEQTSGQTAKDPSVSIRYLAAVNTGAIKADDMPPVQGTVAEHSFLPAEQQGSEDNLKTSTTKCITGQESKIAPSHTMIPPATYSVALLAPKCEQDLTIKNDYSGKWTDQASAEKTGDDNSTRKSFPEEGDIMVTVSSEENVCDIGNEESPLNVLGGLKLKANLKMEAYVPSEEEKNGEILAPPESLCGGKPSGIAELQREPLLVNESLNVENSGFRTNEEIHSESYNKGEISSGRKDNAEAISGHSVEADPKEVEEEERHMPKRKRKQHYLSSEDEPDDNPDVLDSRIETAQRQCPETEPHDTKEENSRDLEELPKTSSETNSTTSRVMEEKDEYSSSETTGEKPEQNDDDTIKSQEEDQPIIIKRKRGRPRKYPVETTLKMKDDSKTDTGIVTVEQSPSSSKLKVMQTDESNKETANLQERSISNDDGEEKIVTSVRRRGRKPKRSLTVSDDAESSEPERKRQKSVSDPVEDKKEQESDEEEEEEEEDEPSGATTRSTTRSEAQRSKTQLSPSIKRKREVSPPGARTRGQQRVEEAPVKKAKR</sequence>
<comment type="function">
    <text evidence="6 7">Component of the fork protection machinery required to protect stalled/damaged replication forks from uncontrolled DNA2-dependent resection. Acts by stabilizing RAD51 at stalled replication forks and protecting RAD51 nucleofilaments from the antirecombinogenic activities of FBH1 and BLM (PubMed:26166705, PubMed:29937342). Does not regulate spindle orientation (PubMed:26166705).</text>
</comment>
<comment type="subunit">
    <text evidence="7">Interacts (via COMPASS-Shg1 domain) with SETD1A at stalled replication forks; this interaction mediates FANCD2-dependent nucleosome remodeling at reversed forks protecting them from nucleolytic degradation.</text>
</comment>
<comment type="interaction">
    <interactant intactId="EBI-2654318">
        <id>Q8NFC6</id>
    </interactant>
    <interactant intactId="EBI-540834">
        <id>P61964</id>
        <label>WDR5</label>
    </interactant>
    <organismsDiffer>false</organismsDiffer>
    <experiments>5</experiments>
</comment>
<comment type="subcellular location">
    <subcellularLocation>
        <location evidence="8">Chromosome</location>
    </subcellularLocation>
    <text evidence="8">Localizes at replication forks: following DNA damage, localizes to damaged replication forks undergoing resection.</text>
</comment>
<comment type="similarity">
    <text evidence="10">Belongs to the BOD1 family.</text>
</comment>
<comment type="sequence caution" evidence="10">
    <conflict type="erroneous initiation">
        <sequence resource="EMBL-CDS" id="AAH16987"/>
    </conflict>
    <text>Truncated N-terminus.</text>
</comment>
<comment type="sequence caution" evidence="10">
    <conflict type="miscellaneous discrepancy">
        <sequence resource="EMBL-CDS" id="BAB15299"/>
    </conflict>
    <text>Contaminating sequence. Potential poly-A sequence.</text>
</comment>
<comment type="sequence caution" evidence="10">
    <conflict type="miscellaneous discrepancy">
        <sequence resource="EMBL-CDS" id="CAB70705"/>
    </conflict>
    <text>Contaminating sequence. Potential poly-A sequence.</text>
</comment>
<accession>Q8NFC6</accession>
<accession>Q6P0M8</accession>
<accession>Q96AL1</accession>
<accession>Q9H6G0</accession>
<accession>Q9NTD6</accession>
<accession>Q9P2L9</accession>
<dbReference type="EMBL" id="AC006445">
    <property type="status" value="NOT_ANNOTATED_CDS"/>
    <property type="molecule type" value="Genomic_DNA"/>
</dbReference>
<dbReference type="EMBL" id="AF528529">
    <property type="protein sequence ID" value="AAM94279.1"/>
    <property type="molecule type" value="mRNA"/>
</dbReference>
<dbReference type="EMBL" id="BC016987">
    <property type="protein sequence ID" value="AAH16987.1"/>
    <property type="status" value="ALT_INIT"/>
    <property type="molecule type" value="mRNA"/>
</dbReference>
<dbReference type="EMBL" id="BC065546">
    <property type="protein sequence ID" value="AAH65546.1"/>
    <property type="molecule type" value="mRNA"/>
</dbReference>
<dbReference type="EMBL" id="BC087835">
    <property type="protein sequence ID" value="AAH87835.1"/>
    <property type="molecule type" value="mRNA"/>
</dbReference>
<dbReference type="EMBL" id="AK025965">
    <property type="protein sequence ID" value="BAB15299.1"/>
    <property type="status" value="ALT_TERM"/>
    <property type="molecule type" value="mRNA"/>
</dbReference>
<dbReference type="EMBL" id="AB037748">
    <property type="protein sequence ID" value="BAA92565.2"/>
    <property type="molecule type" value="mRNA"/>
</dbReference>
<dbReference type="EMBL" id="AL137350">
    <property type="protein sequence ID" value="CAB70705.1"/>
    <property type="status" value="ALT_TERM"/>
    <property type="molecule type" value="mRNA"/>
</dbReference>
<dbReference type="CCDS" id="CCDS3411.2"/>
<dbReference type="PIR" id="T46424">
    <property type="entry name" value="T46424"/>
</dbReference>
<dbReference type="RefSeq" id="NP_683692.2">
    <property type="nucleotide sequence ID" value="NM_148894.3"/>
</dbReference>
<dbReference type="BioGRID" id="129238">
    <property type="interactions" value="153"/>
</dbReference>
<dbReference type="ComplexPortal" id="CPX-7111">
    <property type="entry name" value="Histone-lysine N-methyltransferase complex, SET1B variant"/>
</dbReference>
<dbReference type="CORUM" id="Q8NFC6"/>
<dbReference type="FunCoup" id="Q8NFC6">
    <property type="interactions" value="2729"/>
</dbReference>
<dbReference type="IntAct" id="Q8NFC6">
    <property type="interactions" value="64"/>
</dbReference>
<dbReference type="MINT" id="Q8NFC6"/>
<dbReference type="STRING" id="9606.ENSP00000040738"/>
<dbReference type="GlyCosmos" id="Q8NFC6">
    <property type="glycosylation" value="1 site, 1 glycan"/>
</dbReference>
<dbReference type="GlyGen" id="Q8NFC6">
    <property type="glycosylation" value="6 sites, 1 O-linked glycan (6 sites)"/>
</dbReference>
<dbReference type="iPTMnet" id="Q8NFC6"/>
<dbReference type="PhosphoSitePlus" id="Q8NFC6"/>
<dbReference type="BioMuta" id="BOD1L1"/>
<dbReference type="DMDM" id="158931124"/>
<dbReference type="jPOST" id="Q8NFC6"/>
<dbReference type="MassIVE" id="Q8NFC6"/>
<dbReference type="PaxDb" id="9606-ENSP00000040738"/>
<dbReference type="PeptideAtlas" id="Q8NFC6"/>
<dbReference type="ProteomicsDB" id="73286"/>
<dbReference type="Pumba" id="Q8NFC6"/>
<dbReference type="Antibodypedia" id="50158">
    <property type="antibodies" value="44 antibodies from 15 providers"/>
</dbReference>
<dbReference type="DNASU" id="259282"/>
<dbReference type="Ensembl" id="ENST00000040738.10">
    <property type="protein sequence ID" value="ENSP00000040738.5"/>
    <property type="gene ID" value="ENSG00000038219.13"/>
</dbReference>
<dbReference type="GeneID" id="259282"/>
<dbReference type="KEGG" id="hsa:259282"/>
<dbReference type="MANE-Select" id="ENST00000040738.10">
    <property type="protein sequence ID" value="ENSP00000040738.5"/>
    <property type="RefSeq nucleotide sequence ID" value="NM_148894.3"/>
    <property type="RefSeq protein sequence ID" value="NP_683692.2"/>
</dbReference>
<dbReference type="UCSC" id="uc003gmz.2">
    <property type="organism name" value="human"/>
</dbReference>
<dbReference type="AGR" id="HGNC:31792"/>
<dbReference type="CTD" id="259282"/>
<dbReference type="DisGeNET" id="259282"/>
<dbReference type="GeneCards" id="BOD1L1"/>
<dbReference type="HGNC" id="HGNC:31792">
    <property type="gene designation" value="BOD1L1"/>
</dbReference>
<dbReference type="HPA" id="ENSG00000038219">
    <property type="expression patterns" value="Low tissue specificity"/>
</dbReference>
<dbReference type="MIM" id="616746">
    <property type="type" value="gene"/>
</dbReference>
<dbReference type="neXtProt" id="NX_Q8NFC6"/>
<dbReference type="OpenTargets" id="ENSG00000038219"/>
<dbReference type="PharmGKB" id="PA164716652"/>
<dbReference type="VEuPathDB" id="HostDB:ENSG00000038219"/>
<dbReference type="eggNOG" id="ENOG502QTHP">
    <property type="taxonomic scope" value="Eukaryota"/>
</dbReference>
<dbReference type="GeneTree" id="ENSGT00940000156198"/>
<dbReference type="HOGENOM" id="CLU_000519_0_0_1"/>
<dbReference type="InParanoid" id="Q8NFC6"/>
<dbReference type="OMA" id="CAESQQP"/>
<dbReference type="OrthoDB" id="7605699at2759"/>
<dbReference type="PAN-GO" id="Q8NFC6">
    <property type="GO annotations" value="7 GO annotations based on evolutionary models"/>
</dbReference>
<dbReference type="PhylomeDB" id="Q8NFC6"/>
<dbReference type="TreeFam" id="TF335808"/>
<dbReference type="PathwayCommons" id="Q8NFC6"/>
<dbReference type="Reactome" id="R-HSA-9772755">
    <property type="pathway name" value="Formation of WDR5-containing histone-modifying complexes"/>
</dbReference>
<dbReference type="SignaLink" id="Q8NFC6"/>
<dbReference type="BioGRID-ORCS" id="259282">
    <property type="hits" value="97 hits in 1157 CRISPR screens"/>
</dbReference>
<dbReference type="ChiTaRS" id="BOD1L1">
    <property type="organism name" value="human"/>
</dbReference>
<dbReference type="GenomeRNAi" id="259282"/>
<dbReference type="Pharos" id="Q8NFC6">
    <property type="development level" value="Tdark"/>
</dbReference>
<dbReference type="PRO" id="PR:Q8NFC6"/>
<dbReference type="Proteomes" id="UP000005640">
    <property type="component" value="Chromosome 4"/>
</dbReference>
<dbReference type="RNAct" id="Q8NFC6">
    <property type="molecule type" value="protein"/>
</dbReference>
<dbReference type="Bgee" id="ENSG00000038219">
    <property type="expression patterns" value="Expressed in sural nerve and 187 other cell types or tissues"/>
</dbReference>
<dbReference type="ExpressionAtlas" id="Q8NFC6">
    <property type="expression patterns" value="baseline and differential"/>
</dbReference>
<dbReference type="GO" id="GO:0005694">
    <property type="term" value="C:chromosome"/>
    <property type="evidence" value="ECO:0007669"/>
    <property type="project" value="UniProtKB-SubCell"/>
</dbReference>
<dbReference type="GO" id="GO:0005654">
    <property type="term" value="C:nucleoplasm"/>
    <property type="evidence" value="ECO:0000314"/>
    <property type="project" value="HPA"/>
</dbReference>
<dbReference type="GO" id="GO:0048188">
    <property type="term" value="C:Set1C/COMPASS complex"/>
    <property type="evidence" value="ECO:0000353"/>
    <property type="project" value="ComplexPortal"/>
</dbReference>
<dbReference type="GO" id="GO:0006974">
    <property type="term" value="P:DNA damage response"/>
    <property type="evidence" value="ECO:0000314"/>
    <property type="project" value="UniProtKB"/>
</dbReference>
<dbReference type="GO" id="GO:0006281">
    <property type="term" value="P:DNA repair"/>
    <property type="evidence" value="ECO:0007669"/>
    <property type="project" value="UniProtKB-KW"/>
</dbReference>
<dbReference type="GO" id="GO:0031297">
    <property type="term" value="P:replication fork processing"/>
    <property type="evidence" value="ECO:0000314"/>
    <property type="project" value="UniProtKB"/>
</dbReference>
<dbReference type="InterPro" id="IPR055264">
    <property type="entry name" value="BOD1/SHG1_dom"/>
</dbReference>
<dbReference type="InterPro" id="IPR043244">
    <property type="entry name" value="BOD1L1"/>
</dbReference>
<dbReference type="PANTHER" id="PTHR47391">
    <property type="entry name" value="BIORIENTATION OF CHROMOSOMES IN CELL DIVISION 1 LIKE 1"/>
    <property type="match status" value="1"/>
</dbReference>
<dbReference type="PANTHER" id="PTHR47391:SF1">
    <property type="entry name" value="BIORIENTATION OF CHROMOSOMES IN CELL DIVISION 1 LIKE 1"/>
    <property type="match status" value="1"/>
</dbReference>
<dbReference type="Pfam" id="PF05205">
    <property type="entry name" value="COMPASS-Shg1"/>
    <property type="match status" value="1"/>
</dbReference>
<gene>
    <name evidence="11" type="primary">BOD1L1</name>
    <name type="synonym">BOD1L</name>
    <name type="synonym">FAM44A</name>
    <name evidence="9" type="synonym">KIAA1327</name>
</gene>
<keyword id="KW-0007">Acetylation</keyword>
<keyword id="KW-0158">Chromosome</keyword>
<keyword id="KW-0227">DNA damage</keyword>
<keyword id="KW-0234">DNA repair</keyword>
<keyword id="KW-1017">Isopeptide bond</keyword>
<keyword id="KW-0597">Phosphoprotein</keyword>
<keyword id="KW-1267">Proteomics identification</keyword>
<keyword id="KW-1185">Reference proteome</keyword>
<keyword id="KW-0832">Ubl conjugation</keyword>
<evidence type="ECO:0000250" key="1">
    <source>
        <dbReference type="UniProtKB" id="E9Q6J5"/>
    </source>
</evidence>
<evidence type="ECO:0000256" key="2">
    <source>
        <dbReference type="SAM" id="MobiDB-lite"/>
    </source>
</evidence>
<evidence type="ECO:0000269" key="3">
    <source>
    </source>
</evidence>
<evidence type="ECO:0000269" key="4">
    <source>
    </source>
</evidence>
<evidence type="ECO:0000269" key="5">
    <source>
    </source>
</evidence>
<evidence type="ECO:0000269" key="6">
    <source>
    </source>
</evidence>
<evidence type="ECO:0000269" key="7">
    <source>
    </source>
</evidence>
<evidence type="ECO:0000269" key="8">
    <source ref="2"/>
</evidence>
<evidence type="ECO:0000303" key="9">
    <source>
    </source>
</evidence>
<evidence type="ECO:0000305" key="10"/>
<evidence type="ECO:0000312" key="11">
    <source>
        <dbReference type="HGNC" id="HGNC:31792"/>
    </source>
</evidence>
<evidence type="ECO:0007744" key="12">
    <source>
    </source>
</evidence>
<evidence type="ECO:0007744" key="13">
    <source>
    </source>
</evidence>
<evidence type="ECO:0007744" key="14">
    <source>
    </source>
</evidence>
<evidence type="ECO:0007744" key="15">
    <source>
    </source>
</evidence>
<evidence type="ECO:0007744" key="16">
    <source>
    </source>
</evidence>
<evidence type="ECO:0007744" key="17">
    <source>
    </source>
</evidence>
<evidence type="ECO:0007744" key="18">
    <source>
    </source>
</evidence>
<evidence type="ECO:0007744" key="19">
    <source>
    </source>
</evidence>
<evidence type="ECO:0007744" key="20">
    <source>
    </source>
</evidence>
<feature type="chain" id="PRO_0000187027" description="Biorientation of chromosomes in cell division protein 1-like 1">
    <location>
        <begin position="1"/>
        <end position="3051"/>
    </location>
</feature>
<feature type="DNA-binding region" description="A.T hook">
    <location>
        <begin position="2872"/>
        <end position="2884"/>
    </location>
</feature>
<feature type="region of interest" description="Disordered" evidence="2">
    <location>
        <begin position="1"/>
        <end position="47"/>
    </location>
</feature>
<feature type="region of interest" description="Disordered" evidence="2">
    <location>
        <begin position="164"/>
        <end position="197"/>
    </location>
</feature>
<feature type="region of interest" description="Disordered" evidence="2">
    <location>
        <begin position="215"/>
        <end position="288"/>
    </location>
</feature>
<feature type="region of interest" description="Disordered" evidence="2">
    <location>
        <begin position="301"/>
        <end position="393"/>
    </location>
</feature>
<feature type="region of interest" description="Disordered" evidence="2">
    <location>
        <begin position="411"/>
        <end position="469"/>
    </location>
</feature>
<feature type="region of interest" description="Disordered" evidence="2">
    <location>
        <begin position="497"/>
        <end position="1203"/>
    </location>
</feature>
<feature type="region of interest" description="Disordered" evidence="2">
    <location>
        <begin position="1456"/>
        <end position="1550"/>
    </location>
</feature>
<feature type="region of interest" description="Disordered" evidence="2">
    <location>
        <begin position="1700"/>
        <end position="1725"/>
    </location>
</feature>
<feature type="region of interest" description="Disordered" evidence="2">
    <location>
        <begin position="1760"/>
        <end position="1890"/>
    </location>
</feature>
<feature type="region of interest" description="Disordered" evidence="2">
    <location>
        <begin position="2189"/>
        <end position="2210"/>
    </location>
</feature>
<feature type="region of interest" description="Disordered" evidence="2">
    <location>
        <begin position="2258"/>
        <end position="2285"/>
    </location>
</feature>
<feature type="region of interest" description="Disordered" evidence="2">
    <location>
        <begin position="2403"/>
        <end position="2447"/>
    </location>
</feature>
<feature type="region of interest" description="Disordered" evidence="2">
    <location>
        <begin position="2472"/>
        <end position="2519"/>
    </location>
</feature>
<feature type="region of interest" description="Disordered" evidence="2">
    <location>
        <begin position="2615"/>
        <end position="2635"/>
    </location>
</feature>
<feature type="region of interest" description="Disordered" evidence="2">
    <location>
        <begin position="2717"/>
        <end position="3051"/>
    </location>
</feature>
<feature type="compositionally biased region" description="Pro residues" evidence="2">
    <location>
        <begin position="1"/>
        <end position="33"/>
    </location>
</feature>
<feature type="compositionally biased region" description="Gly residues" evidence="2">
    <location>
        <begin position="34"/>
        <end position="47"/>
    </location>
</feature>
<feature type="compositionally biased region" description="Low complexity" evidence="2">
    <location>
        <begin position="215"/>
        <end position="227"/>
    </location>
</feature>
<feature type="compositionally biased region" description="Basic and acidic residues" evidence="2">
    <location>
        <begin position="246"/>
        <end position="263"/>
    </location>
</feature>
<feature type="compositionally biased region" description="Basic and acidic residues" evidence="2">
    <location>
        <begin position="312"/>
        <end position="393"/>
    </location>
</feature>
<feature type="compositionally biased region" description="Acidic residues" evidence="2">
    <location>
        <begin position="418"/>
        <end position="443"/>
    </location>
</feature>
<feature type="compositionally biased region" description="Basic and acidic residues" evidence="2">
    <location>
        <begin position="497"/>
        <end position="527"/>
    </location>
</feature>
<feature type="compositionally biased region" description="Basic and acidic residues" evidence="2">
    <location>
        <begin position="549"/>
        <end position="570"/>
    </location>
</feature>
<feature type="compositionally biased region" description="Basic and acidic residues" evidence="2">
    <location>
        <begin position="580"/>
        <end position="653"/>
    </location>
</feature>
<feature type="compositionally biased region" description="Basic and acidic residues" evidence="2">
    <location>
        <begin position="671"/>
        <end position="772"/>
    </location>
</feature>
<feature type="compositionally biased region" description="Basic and acidic residues" evidence="2">
    <location>
        <begin position="804"/>
        <end position="852"/>
    </location>
</feature>
<feature type="compositionally biased region" description="Basic and acidic residues" evidence="2">
    <location>
        <begin position="866"/>
        <end position="878"/>
    </location>
</feature>
<feature type="compositionally biased region" description="Basic and acidic residues" evidence="2">
    <location>
        <begin position="940"/>
        <end position="966"/>
    </location>
</feature>
<feature type="compositionally biased region" description="Basic and acidic residues" evidence="2">
    <location>
        <begin position="984"/>
        <end position="1021"/>
    </location>
</feature>
<feature type="compositionally biased region" description="Basic and acidic residues" evidence="2">
    <location>
        <begin position="1028"/>
        <end position="1075"/>
    </location>
</feature>
<feature type="compositionally biased region" description="Polar residues" evidence="2">
    <location>
        <begin position="1092"/>
        <end position="1103"/>
    </location>
</feature>
<feature type="compositionally biased region" description="Polar residues" evidence="2">
    <location>
        <begin position="1135"/>
        <end position="1148"/>
    </location>
</feature>
<feature type="compositionally biased region" description="Basic and acidic residues" evidence="2">
    <location>
        <begin position="1465"/>
        <end position="1479"/>
    </location>
</feature>
<feature type="compositionally biased region" description="Polar residues" evidence="2">
    <location>
        <begin position="1482"/>
        <end position="1504"/>
    </location>
</feature>
<feature type="compositionally biased region" description="Low complexity" evidence="2">
    <location>
        <begin position="2191"/>
        <end position="2207"/>
    </location>
</feature>
<feature type="compositionally biased region" description="Basic and acidic residues" evidence="2">
    <location>
        <begin position="2428"/>
        <end position="2439"/>
    </location>
</feature>
<feature type="compositionally biased region" description="Low complexity" evidence="2">
    <location>
        <begin position="2483"/>
        <end position="2492"/>
    </location>
</feature>
<feature type="compositionally biased region" description="Basic and acidic residues" evidence="2">
    <location>
        <begin position="2621"/>
        <end position="2633"/>
    </location>
</feature>
<feature type="compositionally biased region" description="Basic and acidic residues" evidence="2">
    <location>
        <begin position="2724"/>
        <end position="2746"/>
    </location>
</feature>
<feature type="compositionally biased region" description="Basic and acidic residues" evidence="2">
    <location>
        <begin position="2754"/>
        <end position="2767"/>
    </location>
</feature>
<feature type="compositionally biased region" description="Acidic residues" evidence="2">
    <location>
        <begin position="2780"/>
        <end position="2789"/>
    </location>
</feature>
<feature type="compositionally biased region" description="Basic and acidic residues" evidence="2">
    <location>
        <begin position="2791"/>
        <end position="2822"/>
    </location>
</feature>
<feature type="compositionally biased region" description="Polar residues" evidence="2">
    <location>
        <begin position="2823"/>
        <end position="2834"/>
    </location>
</feature>
<feature type="compositionally biased region" description="Basic and acidic residues" evidence="2">
    <location>
        <begin position="2848"/>
        <end position="2864"/>
    </location>
</feature>
<feature type="compositionally biased region" description="Basic residues" evidence="2">
    <location>
        <begin position="2871"/>
        <end position="2880"/>
    </location>
</feature>
<feature type="compositionally biased region" description="Polar residues" evidence="2">
    <location>
        <begin position="2896"/>
        <end position="2910"/>
    </location>
</feature>
<feature type="compositionally biased region" description="Basic residues" evidence="2">
    <location>
        <begin position="2944"/>
        <end position="2953"/>
    </location>
</feature>
<feature type="compositionally biased region" description="Acidic residues" evidence="2">
    <location>
        <begin position="2985"/>
        <end position="2998"/>
    </location>
</feature>
<feature type="compositionally biased region" description="Polar residues" evidence="2">
    <location>
        <begin position="3000"/>
        <end position="3020"/>
    </location>
</feature>
<feature type="compositionally biased region" description="Basic and acidic residues" evidence="2">
    <location>
        <begin position="3039"/>
        <end position="3051"/>
    </location>
</feature>
<feature type="modified residue" description="Phosphoserine" evidence="16 18 19">
    <location>
        <position position="266"/>
    </location>
</feature>
<feature type="modified residue" description="N6-acetyllysine" evidence="15">
    <location>
        <position position="473"/>
    </location>
</feature>
<feature type="modified residue" description="Phosphoserine" evidence="14 16 17 18 19">
    <location>
        <position position="482"/>
    </location>
</feature>
<feature type="modified residue" description="Phosphoserine" evidence="14 16 17 18 19">
    <location>
        <position position="484"/>
    </location>
</feature>
<feature type="modified residue" description="Phosphoserine" evidence="17 19">
    <location>
        <position position="635"/>
    </location>
</feature>
<feature type="modified residue" description="Phosphoserine" evidence="19">
    <location>
        <position position="659"/>
    </location>
</feature>
<feature type="modified residue" description="Phosphothreonine" evidence="19">
    <location>
        <position position="660"/>
    </location>
</feature>
<feature type="modified residue" description="Phosphothreonine" evidence="19">
    <location>
        <position position="733"/>
    </location>
</feature>
<feature type="modified residue" description="Phosphoserine" evidence="19">
    <location>
        <position position="1077"/>
    </location>
</feature>
<feature type="modified residue" description="Phosphoserine" evidence="13">
    <location>
        <position position="1145"/>
    </location>
</feature>
<feature type="modified residue" description="Phosphoserine" evidence="19">
    <location>
        <position position="1318"/>
    </location>
</feature>
<feature type="modified residue" description="Phosphothreonine" evidence="12 14 19">
    <location>
        <position position="1354"/>
    </location>
</feature>
<feature type="modified residue" description="Phosphoserine" evidence="14 17 18 19">
    <location>
        <position position="1531"/>
    </location>
</feature>
<feature type="modified residue" description="Phosphoserine" evidence="19">
    <location>
        <position position="1701"/>
    </location>
</feature>
<feature type="modified residue" description="Phosphoserine" evidence="13">
    <location>
        <position position="1710"/>
    </location>
</feature>
<feature type="modified residue" description="Phosphoserine" evidence="1">
    <location>
        <position position="2013"/>
    </location>
</feature>
<feature type="modified residue" description="Phosphoserine" evidence="1">
    <location>
        <position position="2025"/>
    </location>
</feature>
<feature type="modified residue" description="Phosphoserine" evidence="19">
    <location>
        <position position="2128"/>
    </location>
</feature>
<feature type="modified residue" description="Phosphoserine" evidence="20">
    <location>
        <position position="2203"/>
    </location>
</feature>
<feature type="modified residue" description="Phosphoserine" evidence="19">
    <location>
        <position position="2475"/>
    </location>
</feature>
<feature type="modified residue" description="Phosphoserine" evidence="17 19">
    <location>
        <position position="2501"/>
    </location>
</feature>
<feature type="modified residue" description="Phosphoserine" evidence="1">
    <location>
        <position position="2618"/>
    </location>
</feature>
<feature type="modified residue" description="Phosphoserine" evidence="18 19">
    <location>
        <position position="2905"/>
    </location>
</feature>
<feature type="modified residue" description="Phosphoserine" evidence="16">
    <location>
        <position position="2907"/>
    </location>
</feature>
<feature type="modified residue" description="Phosphoserine" evidence="14">
    <location>
        <position position="2954"/>
    </location>
</feature>
<feature type="modified residue" description="Phosphothreonine" evidence="16 19">
    <location>
        <position position="2956"/>
    </location>
</feature>
<feature type="modified residue" description="Phosphoserine" evidence="16">
    <location>
        <position position="2958"/>
    </location>
</feature>
<feature type="modified residue" description="Phosphoserine" evidence="16">
    <location>
        <position position="2964"/>
    </location>
</feature>
<feature type="modified residue" description="Phosphoserine" evidence="18">
    <location>
        <position position="2973"/>
    </location>
</feature>
<feature type="modified residue" description="Phosphoserine" evidence="14 18 19">
    <location>
        <position position="2986"/>
    </location>
</feature>
<feature type="modified residue" description="Phosphoserine" evidence="19">
    <location>
        <position position="3019"/>
    </location>
</feature>
<feature type="cross-link" description="Glycyl lysine isopeptide (Lys-Gly) (interchain with G-Cter in ubiquitin)" evidence="5">
    <location>
        <position position="2981"/>
    </location>
</feature>
<feature type="cross-link" description="Glycyl lysine isopeptide (Lys-Gly) (interchain with G-Cter in ubiquitin)" evidence="5">
    <location>
        <position position="2982"/>
    </location>
</feature>
<feature type="sequence variant" id="VAR_036124" description="In a breast cancer sample; somatic mutation." evidence="4">
    <original>S</original>
    <variation>I</variation>
    <location>
        <position position="246"/>
    </location>
</feature>
<feature type="sequence variant" id="VAR_035220" description="In dbSNP:rs2035820.">
    <original>T</original>
    <variation>M</variation>
    <location>
        <position position="429"/>
    </location>
</feature>
<feature type="sequence variant" id="VAR_035221" description="In dbSNP:rs1971278.">
    <original>L</original>
    <variation>I</variation>
    <location>
        <position position="650"/>
    </location>
</feature>
<feature type="sequence variant" id="VAR_035222" description="In dbSNP:rs17745712.">
    <original>A</original>
    <variation>G</variation>
    <location>
        <position position="1369"/>
    </location>
</feature>
<feature type="sequence variant" id="VAR_035223" description="In dbSNP:rs17745676.">
    <original>T</original>
    <variation>A</variation>
    <location>
        <position position="1448"/>
    </location>
</feature>
<feature type="sequence variant" id="VAR_035224" description="In dbSNP:rs16888885.">
    <original>T</original>
    <variation>A</variation>
    <location>
        <position position="1515"/>
    </location>
</feature>
<feature type="sequence variant" id="VAR_035225" description="In dbSNP:rs17807493.">
    <original>V</original>
    <variation>I</variation>
    <location>
        <position position="1645"/>
    </location>
</feature>
<feature type="sequence variant" id="VAR_035226" description="In dbSNP:rs3822227.">
    <original>G</original>
    <variation>S</variation>
    <location>
        <position position="2361"/>
    </location>
</feature>
<feature type="sequence variant" id="VAR_035227" description="In dbSNP:rs3733557." evidence="3">
    <original>P</original>
    <variation>L</variation>
    <location>
        <position position="2396"/>
    </location>
</feature>
<feature type="sequence variant" id="VAR_061166" description="In dbSNP:rs28538279.">
    <original>V</original>
    <variation>M</variation>
    <location>
        <position position="2944"/>
    </location>
</feature>
<feature type="sequence conflict" description="In Ref. 3; AAH65546/AAH87835." evidence="10" ref="3">
    <original>E</original>
    <variation>K</variation>
    <location>
        <position position="337"/>
    </location>
</feature>
<feature type="sequence conflict" description="In Ref. 2; AAM94279." evidence="10" ref="2">
    <original>AKEKE</original>
    <variation>GILWF</variation>
    <location>
        <begin position="498"/>
        <end position="502"/>
    </location>
</feature>
<feature type="sequence conflict" description="In Ref. 4; BAB15299." evidence="10" ref="4">
    <original>N</original>
    <variation>S</variation>
    <location>
        <position position="1417"/>
    </location>
</feature>
<feature type="sequence conflict" description="In Ref. 4; BAB15299." evidence="10" ref="4">
    <original>I</original>
    <variation>V</variation>
    <location>
        <position position="1438"/>
    </location>
</feature>
<feature type="sequence conflict" description="In Ref. 4; BAB15299." evidence="10" ref="4">
    <original>V</original>
    <variation>M</variation>
    <location>
        <position position="1740"/>
    </location>
</feature>
<proteinExistence type="evidence at protein level"/>
<organism>
    <name type="scientific">Homo sapiens</name>
    <name type="common">Human</name>
    <dbReference type="NCBI Taxonomy" id="9606"/>
    <lineage>
        <taxon>Eukaryota</taxon>
        <taxon>Metazoa</taxon>
        <taxon>Chordata</taxon>
        <taxon>Craniata</taxon>
        <taxon>Vertebrata</taxon>
        <taxon>Euteleostomi</taxon>
        <taxon>Mammalia</taxon>
        <taxon>Eutheria</taxon>
        <taxon>Euarchontoglires</taxon>
        <taxon>Primates</taxon>
        <taxon>Haplorrhini</taxon>
        <taxon>Catarrhini</taxon>
        <taxon>Hominidae</taxon>
        <taxon>Homo</taxon>
    </lineage>
</organism>